<keyword id="KW-1003">Cell membrane</keyword>
<keyword id="KW-0378">Hydrolase</keyword>
<keyword id="KW-0472">Membrane</keyword>
<keyword id="KW-0479">Metal-binding</keyword>
<keyword id="KW-0482">Metalloprotease</keyword>
<keyword id="KW-0645">Protease</keyword>
<keyword id="KW-0812">Transmembrane</keyword>
<keyword id="KW-1133">Transmembrane helix</keyword>
<keyword id="KW-0862">Zinc</keyword>
<proteinExistence type="inferred from homology"/>
<organism>
    <name type="scientific">Streptococcus equi subsp. zooepidemicus (strain H70)</name>
    <dbReference type="NCBI Taxonomy" id="553483"/>
    <lineage>
        <taxon>Bacteria</taxon>
        <taxon>Bacillati</taxon>
        <taxon>Bacillota</taxon>
        <taxon>Bacilli</taxon>
        <taxon>Lactobacillales</taxon>
        <taxon>Streptococcaceae</taxon>
        <taxon>Streptococcus</taxon>
    </lineage>
</organism>
<reference key="1">
    <citation type="journal article" date="2009" name="PLoS Pathog.">
        <title>Genomic evidence for the evolution of Streptococcus equi: host restriction, increased virulence, and genetic exchange with human pathogens.</title>
        <authorList>
            <person name="Holden M.T.G."/>
            <person name="Heather Z."/>
            <person name="Paillot R."/>
            <person name="Steward K.F."/>
            <person name="Webb K."/>
            <person name="Ainslie F."/>
            <person name="Jourdan T."/>
            <person name="Bason N.C."/>
            <person name="Holroyd N.E."/>
            <person name="Mungall K."/>
            <person name="Quail M.A."/>
            <person name="Sanders M."/>
            <person name="Simmonds M."/>
            <person name="Willey D."/>
            <person name="Brooks K."/>
            <person name="Aanensen D.M."/>
            <person name="Spratt B.G."/>
            <person name="Jolley K.A."/>
            <person name="Maiden M.C.J."/>
            <person name="Kehoe M."/>
            <person name="Chanter N."/>
            <person name="Bentley S.D."/>
            <person name="Robinson C."/>
            <person name="Maskell D.J."/>
            <person name="Parkhill J."/>
            <person name="Waller A.S."/>
        </authorList>
    </citation>
    <scope>NUCLEOTIDE SEQUENCE [LARGE SCALE GENOMIC DNA]</scope>
    <source>
        <strain>H70</strain>
    </source>
</reference>
<evidence type="ECO:0000255" key="1">
    <source>
        <dbReference type="HAMAP-Rule" id="MF_00188"/>
    </source>
</evidence>
<gene>
    <name evidence="1" type="primary">htpX</name>
    <name type="ordered locus">SZO_03050</name>
</gene>
<accession>C0MG49</accession>
<sequence length="297" mass="32586">MLYQQISQNKRRTVILLFAFFVLLVVIGAAAGYLLADSYQLGAAFALIIGAIYAFSMIFQSTSLVMGMNKAKEITVNDAPDFFHIVEDMALVAQIPMPKVFIIDDPSLNAFATGSSPQNAAVAATTGLLKVMNREELEAVIGHEVSHIRNYDIRISTIAVALASAVTLISSIGGRMMWYSGGRRRDDDRNDNGFGAIMLIFSILSLILAPLAASLVQLAISRQREYLADASSVELTRNPEGMIRALQKLSNSQPMTHPVDDASAALYINEPRKKEKLSALFSTHPPIEDRIERLKHM</sequence>
<feature type="chain" id="PRO_1000203978" description="Protease HtpX homolog">
    <location>
        <begin position="1"/>
        <end position="297"/>
    </location>
</feature>
<feature type="transmembrane region" description="Helical" evidence="1">
    <location>
        <begin position="14"/>
        <end position="34"/>
    </location>
</feature>
<feature type="transmembrane region" description="Helical" evidence="1">
    <location>
        <begin position="39"/>
        <end position="59"/>
    </location>
</feature>
<feature type="transmembrane region" description="Helical" evidence="1">
    <location>
        <begin position="158"/>
        <end position="178"/>
    </location>
</feature>
<feature type="transmembrane region" description="Helical" evidence="1">
    <location>
        <begin position="193"/>
        <end position="213"/>
    </location>
</feature>
<feature type="active site" evidence="1">
    <location>
        <position position="144"/>
    </location>
</feature>
<feature type="binding site" evidence="1">
    <location>
        <position position="143"/>
    </location>
    <ligand>
        <name>Zn(2+)</name>
        <dbReference type="ChEBI" id="CHEBI:29105"/>
        <note>catalytic</note>
    </ligand>
</feature>
<feature type="binding site" evidence="1">
    <location>
        <position position="147"/>
    </location>
    <ligand>
        <name>Zn(2+)</name>
        <dbReference type="ChEBI" id="CHEBI:29105"/>
        <note>catalytic</note>
    </ligand>
</feature>
<feature type="binding site" evidence="1">
    <location>
        <position position="225"/>
    </location>
    <ligand>
        <name>Zn(2+)</name>
        <dbReference type="ChEBI" id="CHEBI:29105"/>
        <note>catalytic</note>
    </ligand>
</feature>
<dbReference type="EC" id="3.4.24.-" evidence="1"/>
<dbReference type="EMBL" id="FM204884">
    <property type="protein sequence ID" value="CAW98107.1"/>
    <property type="molecule type" value="Genomic_DNA"/>
</dbReference>
<dbReference type="KEGG" id="seq:SZO_03050"/>
<dbReference type="eggNOG" id="COG0501">
    <property type="taxonomic scope" value="Bacteria"/>
</dbReference>
<dbReference type="HOGENOM" id="CLU_042266_2_1_9"/>
<dbReference type="Proteomes" id="UP000001368">
    <property type="component" value="Chromosome"/>
</dbReference>
<dbReference type="GO" id="GO:0005886">
    <property type="term" value="C:plasma membrane"/>
    <property type="evidence" value="ECO:0007669"/>
    <property type="project" value="UniProtKB-SubCell"/>
</dbReference>
<dbReference type="GO" id="GO:0004222">
    <property type="term" value="F:metalloendopeptidase activity"/>
    <property type="evidence" value="ECO:0007669"/>
    <property type="project" value="UniProtKB-UniRule"/>
</dbReference>
<dbReference type="GO" id="GO:0008270">
    <property type="term" value="F:zinc ion binding"/>
    <property type="evidence" value="ECO:0007669"/>
    <property type="project" value="UniProtKB-UniRule"/>
</dbReference>
<dbReference type="GO" id="GO:0006508">
    <property type="term" value="P:proteolysis"/>
    <property type="evidence" value="ECO:0007669"/>
    <property type="project" value="UniProtKB-KW"/>
</dbReference>
<dbReference type="CDD" id="cd07340">
    <property type="entry name" value="M48B_Htpx_like"/>
    <property type="match status" value="1"/>
</dbReference>
<dbReference type="Gene3D" id="3.30.2010.10">
    <property type="entry name" value="Metalloproteases ('zincins'), catalytic domain"/>
    <property type="match status" value="1"/>
</dbReference>
<dbReference type="HAMAP" id="MF_00188">
    <property type="entry name" value="Pept_M48_protease_HtpX"/>
    <property type="match status" value="1"/>
</dbReference>
<dbReference type="InterPro" id="IPR050083">
    <property type="entry name" value="HtpX_protease"/>
</dbReference>
<dbReference type="InterPro" id="IPR022919">
    <property type="entry name" value="Pept_M48_protease_HtpX"/>
</dbReference>
<dbReference type="InterPro" id="IPR001915">
    <property type="entry name" value="Peptidase_M48"/>
</dbReference>
<dbReference type="NCBIfam" id="NF003425">
    <property type="entry name" value="PRK04897.1"/>
    <property type="match status" value="1"/>
</dbReference>
<dbReference type="PANTHER" id="PTHR43221">
    <property type="entry name" value="PROTEASE HTPX"/>
    <property type="match status" value="1"/>
</dbReference>
<dbReference type="PANTHER" id="PTHR43221:SF1">
    <property type="entry name" value="PROTEASE HTPX"/>
    <property type="match status" value="1"/>
</dbReference>
<dbReference type="Pfam" id="PF01435">
    <property type="entry name" value="Peptidase_M48"/>
    <property type="match status" value="1"/>
</dbReference>
<name>HTPX_STRS7</name>
<comment type="cofactor">
    <cofactor evidence="1">
        <name>Zn(2+)</name>
        <dbReference type="ChEBI" id="CHEBI:29105"/>
    </cofactor>
    <text evidence="1">Binds 1 zinc ion per subunit.</text>
</comment>
<comment type="subcellular location">
    <subcellularLocation>
        <location evidence="1">Cell membrane</location>
        <topology evidence="1">Multi-pass membrane protein</topology>
    </subcellularLocation>
</comment>
<comment type="similarity">
    <text evidence="1">Belongs to the peptidase M48B family.</text>
</comment>
<protein>
    <recommendedName>
        <fullName evidence="1">Protease HtpX homolog</fullName>
        <ecNumber evidence="1">3.4.24.-</ecNumber>
    </recommendedName>
</protein>